<feature type="chain" id="PRO_0000197816" description="Melanopsin">
    <location>
        <begin position="1"/>
        <end position="521"/>
    </location>
</feature>
<feature type="topological domain" description="Extracellular" evidence="1">
    <location>
        <begin position="1"/>
        <end position="71"/>
    </location>
</feature>
<feature type="transmembrane region" description="Helical; Name=1" evidence="1">
    <location>
        <begin position="72"/>
        <end position="92"/>
    </location>
</feature>
<feature type="topological domain" description="Cytoplasmic" evidence="1">
    <location>
        <begin position="93"/>
        <end position="106"/>
    </location>
</feature>
<feature type="transmembrane region" description="Helical; Name=2" evidence="1">
    <location>
        <begin position="107"/>
        <end position="127"/>
    </location>
</feature>
<feature type="topological domain" description="Extracellular" evidence="1">
    <location>
        <begin position="128"/>
        <end position="143"/>
    </location>
</feature>
<feature type="transmembrane region" description="Helical; Name=3" evidence="1">
    <location>
        <begin position="144"/>
        <end position="164"/>
    </location>
</feature>
<feature type="topological domain" description="Cytoplasmic" evidence="1">
    <location>
        <begin position="165"/>
        <end position="187"/>
    </location>
</feature>
<feature type="transmembrane region" description="Helical; Name=4" evidence="1">
    <location>
        <begin position="188"/>
        <end position="208"/>
    </location>
</feature>
<feature type="topological domain" description="Extracellular" evidence="1">
    <location>
        <begin position="209"/>
        <end position="237"/>
    </location>
</feature>
<feature type="transmembrane region" description="Helical; Name=5" evidence="1">
    <location>
        <begin position="238"/>
        <end position="258"/>
    </location>
</feature>
<feature type="topological domain" description="Cytoplasmic" evidence="1">
    <location>
        <begin position="259"/>
        <end position="293"/>
    </location>
</feature>
<feature type="transmembrane region" description="Helical; Name=6" evidence="1">
    <location>
        <begin position="294"/>
        <end position="314"/>
    </location>
</feature>
<feature type="topological domain" description="Extracellular" evidence="1">
    <location>
        <begin position="315"/>
        <end position="329"/>
    </location>
</feature>
<feature type="transmembrane region" description="Helical; Name=7" evidence="1">
    <location>
        <begin position="330"/>
        <end position="350"/>
    </location>
</feature>
<feature type="topological domain" description="Cytoplasmic" evidence="1">
    <location>
        <begin position="351"/>
        <end position="521"/>
    </location>
</feature>
<feature type="region of interest" description="Disordered" evidence="3">
    <location>
        <begin position="445"/>
        <end position="486"/>
    </location>
</feature>
<feature type="compositionally biased region" description="Polar residues" evidence="3">
    <location>
        <begin position="449"/>
        <end position="458"/>
    </location>
</feature>
<feature type="modified residue" description="N6-(retinylidene)lysine">
    <location>
        <position position="337"/>
    </location>
</feature>
<feature type="glycosylation site" description="N-linked (GlcNAc...) asparagine" evidence="1">
    <location>
        <position position="30"/>
    </location>
</feature>
<feature type="glycosylation site" description="N-linked (GlcNAc...) asparagine" evidence="1">
    <location>
        <position position="34"/>
    </location>
</feature>
<feature type="disulfide bond" evidence="2">
    <location>
        <begin position="142"/>
        <end position="220"/>
    </location>
</feature>
<feature type="splice variant" id="VSP_045928" description="In isoform 2." evidence="12">
    <original>VQRSKTPKVPGPSTCRPMKGQGARPSSLRGDQKGRLAVCTGLSECPHPHTSQFPLAFLEDDVTLRHL</original>
    <variation>TKGHLPSLDLGM</variation>
    <location>
        <begin position="455"/>
        <end position="521"/>
    </location>
</feature>
<proteinExistence type="evidence at protein level"/>
<keyword id="KW-0025">Alternative splicing</keyword>
<keyword id="KW-0090">Biological rhythms</keyword>
<keyword id="KW-1003">Cell membrane</keyword>
<keyword id="KW-0966">Cell projection</keyword>
<keyword id="KW-0157">Chromophore</keyword>
<keyword id="KW-1015">Disulfide bond</keyword>
<keyword id="KW-0297">G-protein coupled receptor</keyword>
<keyword id="KW-0325">Glycoprotein</keyword>
<keyword id="KW-0472">Membrane</keyword>
<keyword id="KW-0600">Photoreceptor protein</keyword>
<keyword id="KW-0675">Receptor</keyword>
<keyword id="KW-1185">Reference proteome</keyword>
<keyword id="KW-0681">Retinal protein</keyword>
<keyword id="KW-0716">Sensory transduction</keyword>
<keyword id="KW-0807">Transducer</keyword>
<keyword id="KW-0812">Transmembrane</keyword>
<keyword id="KW-1133">Transmembrane helix</keyword>
<dbReference type="EMBL" id="AF147789">
    <property type="protein sequence ID" value="AAF24979.1"/>
    <property type="molecule type" value="mRNA"/>
</dbReference>
<dbReference type="EMBL" id="EU303117">
    <property type="protein sequence ID" value="ACA01962.1"/>
    <property type="molecule type" value="mRNA"/>
</dbReference>
<dbReference type="EMBL" id="EU303118">
    <property type="protein sequence ID" value="ACA01963.1"/>
    <property type="molecule type" value="mRNA"/>
</dbReference>
<dbReference type="EMBL" id="AC114543">
    <property type="status" value="NOT_ANNOTATED_CDS"/>
    <property type="molecule type" value="Genomic_DNA"/>
</dbReference>
<dbReference type="EMBL" id="BC139827">
    <property type="protein sequence ID" value="AAI39828.1"/>
    <property type="molecule type" value="mRNA"/>
</dbReference>
<dbReference type="CCDS" id="CCDS26943.1">
    <molecule id="Q9QXZ9-1"/>
</dbReference>
<dbReference type="CCDS" id="CCDS49446.1">
    <molecule id="Q9QXZ9-2"/>
</dbReference>
<dbReference type="RefSeq" id="NP_001122071.1">
    <molecule id="Q9QXZ9-2"/>
    <property type="nucleotide sequence ID" value="NM_001128599.1"/>
</dbReference>
<dbReference type="RefSeq" id="NP_038915.1">
    <molecule id="Q9QXZ9-1"/>
    <property type="nucleotide sequence ID" value="NM_013887.2"/>
</dbReference>
<dbReference type="SMR" id="Q9QXZ9"/>
<dbReference type="FunCoup" id="Q9QXZ9">
    <property type="interactions" value="697"/>
</dbReference>
<dbReference type="IntAct" id="Q9QXZ9">
    <property type="interactions" value="4"/>
</dbReference>
<dbReference type="STRING" id="10090.ENSMUSP00000022331"/>
<dbReference type="GlyCosmos" id="Q9QXZ9">
    <property type="glycosylation" value="2 sites, No reported glycans"/>
</dbReference>
<dbReference type="GlyGen" id="Q9QXZ9">
    <property type="glycosylation" value="3 sites"/>
</dbReference>
<dbReference type="iPTMnet" id="Q9QXZ9"/>
<dbReference type="PhosphoSitePlus" id="Q9QXZ9"/>
<dbReference type="PaxDb" id="10090-ENSMUSP00000022331"/>
<dbReference type="Antibodypedia" id="30087">
    <property type="antibodies" value="99 antibodies from 23 providers"/>
</dbReference>
<dbReference type="DNASU" id="30044"/>
<dbReference type="Ensembl" id="ENSMUST00000022331.3">
    <molecule id="Q9QXZ9-1"/>
    <property type="protein sequence ID" value="ENSMUSP00000022331.3"/>
    <property type="gene ID" value="ENSMUSG00000021799.10"/>
</dbReference>
<dbReference type="Ensembl" id="ENSMUST00000168444.9">
    <molecule id="Q9QXZ9-2"/>
    <property type="protein sequence ID" value="ENSMUSP00000126136.2"/>
    <property type="gene ID" value="ENSMUSG00000021799.10"/>
</dbReference>
<dbReference type="GeneID" id="30044"/>
<dbReference type="KEGG" id="mmu:30044"/>
<dbReference type="UCSC" id="uc007tbh.2">
    <molecule id="Q9QXZ9-1"/>
    <property type="organism name" value="mouse"/>
</dbReference>
<dbReference type="UCSC" id="uc011ziw.1">
    <molecule id="Q9QXZ9-2"/>
    <property type="organism name" value="mouse"/>
</dbReference>
<dbReference type="AGR" id="MGI:1353425"/>
<dbReference type="CTD" id="94233"/>
<dbReference type="MGI" id="MGI:1353425">
    <property type="gene designation" value="Opn4"/>
</dbReference>
<dbReference type="VEuPathDB" id="HostDB:ENSMUSG00000021799"/>
<dbReference type="eggNOG" id="KOG3656">
    <property type="taxonomic scope" value="Eukaryota"/>
</dbReference>
<dbReference type="GeneTree" id="ENSGT01120000271853"/>
<dbReference type="HOGENOM" id="CLU_009579_3_12_1"/>
<dbReference type="InParanoid" id="Q9QXZ9"/>
<dbReference type="OMA" id="WKMAKIV"/>
<dbReference type="OrthoDB" id="9996086at2759"/>
<dbReference type="PhylomeDB" id="Q9QXZ9"/>
<dbReference type="TreeFam" id="TF324998"/>
<dbReference type="Reactome" id="R-MMU-416476">
    <property type="pathway name" value="G alpha (q) signalling events"/>
</dbReference>
<dbReference type="Reactome" id="R-MMU-419771">
    <property type="pathway name" value="Opsins"/>
</dbReference>
<dbReference type="BioGRID-ORCS" id="30044">
    <property type="hits" value="5 hits in 78 CRISPR screens"/>
</dbReference>
<dbReference type="PRO" id="PR:Q9QXZ9"/>
<dbReference type="Proteomes" id="UP000000589">
    <property type="component" value="Chromosome 14"/>
</dbReference>
<dbReference type="RNAct" id="Q9QXZ9">
    <property type="molecule type" value="protein"/>
</dbReference>
<dbReference type="Bgee" id="ENSMUSG00000021799">
    <property type="expression patterns" value="Expressed in iris and 39 other cell types or tissues"/>
</dbReference>
<dbReference type="GO" id="GO:0030424">
    <property type="term" value="C:axon"/>
    <property type="evidence" value="ECO:0007669"/>
    <property type="project" value="UniProtKB-SubCell"/>
</dbReference>
<dbReference type="GO" id="GO:0030425">
    <property type="term" value="C:dendrite"/>
    <property type="evidence" value="ECO:0007669"/>
    <property type="project" value="UniProtKB-SubCell"/>
</dbReference>
<dbReference type="GO" id="GO:0016020">
    <property type="term" value="C:membrane"/>
    <property type="evidence" value="ECO:0000304"/>
    <property type="project" value="UniProtKB"/>
</dbReference>
<dbReference type="GO" id="GO:0043204">
    <property type="term" value="C:perikaryon"/>
    <property type="evidence" value="ECO:0007669"/>
    <property type="project" value="UniProtKB-SubCell"/>
</dbReference>
<dbReference type="GO" id="GO:0005886">
    <property type="term" value="C:plasma membrane"/>
    <property type="evidence" value="ECO:0000314"/>
    <property type="project" value="MGI"/>
</dbReference>
<dbReference type="GO" id="GO:1990913">
    <property type="term" value="C:sperm head plasma membrane"/>
    <property type="evidence" value="ECO:0000314"/>
    <property type="project" value="MGI"/>
</dbReference>
<dbReference type="GO" id="GO:0005502">
    <property type="term" value="F:11-cis retinal binding"/>
    <property type="evidence" value="ECO:0000250"/>
    <property type="project" value="UniProtKB"/>
</dbReference>
<dbReference type="GO" id="GO:0008020">
    <property type="term" value="F:G protein-coupled photoreceptor activity"/>
    <property type="evidence" value="ECO:0000314"/>
    <property type="project" value="MGI"/>
</dbReference>
<dbReference type="GO" id="GO:0050960">
    <property type="term" value="P:detection of temperature stimulus involved in thermoception"/>
    <property type="evidence" value="ECO:0000316"/>
    <property type="project" value="MGI"/>
</dbReference>
<dbReference type="GO" id="GO:0043153">
    <property type="term" value="P:entrainment of circadian clock by photoperiod"/>
    <property type="evidence" value="ECO:0000315"/>
    <property type="project" value="MGI"/>
</dbReference>
<dbReference type="GO" id="GO:0016056">
    <property type="term" value="P:G protein-coupled opsin signaling pathway"/>
    <property type="evidence" value="ECO:0000314"/>
    <property type="project" value="MGI"/>
</dbReference>
<dbReference type="GO" id="GO:1990384">
    <property type="term" value="P:hyaloid vascular plexus regression"/>
    <property type="evidence" value="ECO:0000315"/>
    <property type="project" value="UniProtKB"/>
</dbReference>
<dbReference type="GO" id="GO:0007634">
    <property type="term" value="P:optokinetic behavior"/>
    <property type="evidence" value="ECO:0000315"/>
    <property type="project" value="UniProtKB"/>
</dbReference>
<dbReference type="GO" id="GO:0007602">
    <property type="term" value="P:phototransduction"/>
    <property type="evidence" value="ECO:0000315"/>
    <property type="project" value="UniProtKB"/>
</dbReference>
<dbReference type="GO" id="GO:0045938">
    <property type="term" value="P:positive regulation of circadian sleep/wake cycle, sleep"/>
    <property type="evidence" value="ECO:0000315"/>
    <property type="project" value="MGI"/>
</dbReference>
<dbReference type="GO" id="GO:0042752">
    <property type="term" value="P:regulation of circadian rhythm"/>
    <property type="evidence" value="ECO:0000315"/>
    <property type="project" value="UniProtKB"/>
</dbReference>
<dbReference type="GO" id="GO:0060041">
    <property type="term" value="P:retina development in camera-type eye"/>
    <property type="evidence" value="ECO:0000316"/>
    <property type="project" value="MGI"/>
</dbReference>
<dbReference type="GO" id="GO:0048511">
    <property type="term" value="P:rhythmic process"/>
    <property type="evidence" value="ECO:0007669"/>
    <property type="project" value="UniProtKB-KW"/>
</dbReference>
<dbReference type="GO" id="GO:0043052">
    <property type="term" value="P:thermotaxis"/>
    <property type="evidence" value="ECO:0000316"/>
    <property type="project" value="MGI"/>
</dbReference>
<dbReference type="GO" id="GO:0007601">
    <property type="term" value="P:visual perception"/>
    <property type="evidence" value="ECO:0007669"/>
    <property type="project" value="InterPro"/>
</dbReference>
<dbReference type="FunFam" id="1.20.1070.10:FF:000083">
    <property type="entry name" value="Melanopsin 1"/>
    <property type="match status" value="1"/>
</dbReference>
<dbReference type="Gene3D" id="1.20.1070.10">
    <property type="entry name" value="Rhodopsin 7-helix transmembrane proteins"/>
    <property type="match status" value="1"/>
</dbReference>
<dbReference type="InterPro" id="IPR050125">
    <property type="entry name" value="GPCR_opsins"/>
</dbReference>
<dbReference type="InterPro" id="IPR000276">
    <property type="entry name" value="GPCR_Rhodpsn"/>
</dbReference>
<dbReference type="InterPro" id="IPR017452">
    <property type="entry name" value="GPCR_Rhodpsn_7TM"/>
</dbReference>
<dbReference type="InterPro" id="IPR001760">
    <property type="entry name" value="Opsin"/>
</dbReference>
<dbReference type="InterPro" id="IPR027430">
    <property type="entry name" value="Retinal_BS"/>
</dbReference>
<dbReference type="PANTHER" id="PTHR24240">
    <property type="entry name" value="OPSIN"/>
    <property type="match status" value="1"/>
</dbReference>
<dbReference type="Pfam" id="PF00001">
    <property type="entry name" value="7tm_1"/>
    <property type="match status" value="1"/>
</dbReference>
<dbReference type="PRINTS" id="PR00237">
    <property type="entry name" value="GPCRRHODOPSN"/>
</dbReference>
<dbReference type="PRINTS" id="PR00238">
    <property type="entry name" value="OPSIN"/>
</dbReference>
<dbReference type="SMART" id="SM01381">
    <property type="entry name" value="7TM_GPCR_Srsx"/>
    <property type="match status" value="1"/>
</dbReference>
<dbReference type="SUPFAM" id="SSF81321">
    <property type="entry name" value="Family A G protein-coupled receptor-like"/>
    <property type="match status" value="1"/>
</dbReference>
<dbReference type="PROSITE" id="PS00237">
    <property type="entry name" value="G_PROTEIN_RECEP_F1_1"/>
    <property type="match status" value="1"/>
</dbReference>
<dbReference type="PROSITE" id="PS50262">
    <property type="entry name" value="G_PROTEIN_RECEP_F1_2"/>
    <property type="match status" value="1"/>
</dbReference>
<dbReference type="PROSITE" id="PS00238">
    <property type="entry name" value="OPSIN"/>
    <property type="match status" value="1"/>
</dbReference>
<sequence length="521" mass="57231">MDSPSGPRVLSSLTQDPSFTTSPALQGIWNGTQNVSVRAQLLSVSPTTSAHQAAAWVPFPTVDVPDHAHYTLGTVILLVGLTGMLGNLTVIYTFCRNRGLRTPANMFIINLAVSDFLMSVTQAPVFFASSLYKKWLFGETGCEFYAFCGAVFGITSMITLTAIAMDRYLVITRPLATIGRGSKRRTALVLLGVWLYALAWSLPPFFGWSAYVPEGLLTSCSWDYMTFTPQVRAYTMLLFCFVFFLPLLIIIFCYIFIFRAIRETGRACEGCGESPLRQRRQWQRLQSEWKMAKVALIVILLFVLSWAPYSTVALVAFAGYSHILTPYMSSVPAVIAKASAIHNPIIYAITHPKYRVAIAQHLPCLGVLLGVSGQRSHPSLSYRSTHRSTLSSQSSDLSWISGRKRQESLGSESEVGWTDTETTAAWGAAQQASGQSFCSQNLEDGELKASSSPQVQRSKTPKVPGPSTCRPMKGQGARPSSLRGDQKGRLAVCTGLSECPHPHTSQFPLAFLEDDVTLRHL</sequence>
<evidence type="ECO:0000255" key="1"/>
<evidence type="ECO:0000255" key="2">
    <source>
        <dbReference type="PROSITE-ProRule" id="PRU00521"/>
    </source>
</evidence>
<evidence type="ECO:0000256" key="3">
    <source>
        <dbReference type="SAM" id="MobiDB-lite"/>
    </source>
</evidence>
<evidence type="ECO:0000269" key="4">
    <source>
    </source>
</evidence>
<evidence type="ECO:0000269" key="5">
    <source>
    </source>
</evidence>
<evidence type="ECO:0000269" key="6">
    <source>
    </source>
</evidence>
<evidence type="ECO:0000269" key="7">
    <source>
    </source>
</evidence>
<evidence type="ECO:0000269" key="8">
    <source>
    </source>
</evidence>
<evidence type="ECO:0000269" key="9">
    <source>
    </source>
</evidence>
<evidence type="ECO:0000269" key="10">
    <source>
    </source>
</evidence>
<evidence type="ECO:0000269" key="11">
    <source>
    </source>
</evidence>
<evidence type="ECO:0000303" key="12">
    <source>
    </source>
</evidence>
<reference key="1">
    <citation type="journal article" date="2000" name="J. Neurosci.">
        <title>A novel human opsin in the inner retina.</title>
        <authorList>
            <person name="Provencio I."/>
            <person name="Rodriguez I.R."/>
            <person name="Jiang G."/>
            <person name="Hayes W.P."/>
            <person name="Moreira E.F."/>
            <person name="Rollag M.D."/>
        </authorList>
    </citation>
    <scope>NUCLEOTIDE SEQUENCE [MRNA] (ISOFORM 1)</scope>
    <scope>TISSUE SPECIFICITY</scope>
    <source>
        <tissue>Retina</tissue>
    </source>
</reference>
<reference key="2">
    <citation type="journal article" date="2009" name="J. Neurosci.">
        <title>Differential expression of two distinct functional isoforms of melanopsin (Opn4) in the mammalian retina.</title>
        <authorList>
            <person name="Pires S.S."/>
            <person name="Hughes S."/>
            <person name="Turton M."/>
            <person name="Melyan Z."/>
            <person name="Peirson S.N."/>
            <person name="Zheng L."/>
            <person name="Kosmaoglou M."/>
            <person name="Bellingham J."/>
            <person name="Cheetham M.E."/>
            <person name="Lucas R.J."/>
            <person name="Foster R.G."/>
            <person name="Hankins M.W."/>
            <person name="Halford S."/>
        </authorList>
    </citation>
    <scope>NUCLEOTIDE SEQUENCE [MRNA] (ISOFORMS 1 AND 2)</scope>
    <scope>SYNTHESIS OF 1-15 AND 500-514</scope>
    <scope>FUNCTION</scope>
    <scope>SUBCELLULAR LOCATION</scope>
    <scope>TISSUE SPECIFICITY</scope>
    <source>
        <strain>C3H/He</strain>
        <tissue>Retina</tissue>
    </source>
</reference>
<reference key="3">
    <citation type="journal article" date="2009" name="PLoS Biol.">
        <title>Lineage-specific biology revealed by a finished genome assembly of the mouse.</title>
        <authorList>
            <person name="Church D.M."/>
            <person name="Goodstadt L."/>
            <person name="Hillier L.W."/>
            <person name="Zody M.C."/>
            <person name="Goldstein S."/>
            <person name="She X."/>
            <person name="Bult C.J."/>
            <person name="Agarwala R."/>
            <person name="Cherry J.L."/>
            <person name="DiCuccio M."/>
            <person name="Hlavina W."/>
            <person name="Kapustin Y."/>
            <person name="Meric P."/>
            <person name="Maglott D."/>
            <person name="Birtle Z."/>
            <person name="Marques A.C."/>
            <person name="Graves T."/>
            <person name="Zhou S."/>
            <person name="Teague B."/>
            <person name="Potamousis K."/>
            <person name="Churas C."/>
            <person name="Place M."/>
            <person name="Herschleb J."/>
            <person name="Runnheim R."/>
            <person name="Forrest D."/>
            <person name="Amos-Landgraf J."/>
            <person name="Schwartz D.C."/>
            <person name="Cheng Z."/>
            <person name="Lindblad-Toh K."/>
            <person name="Eichler E.E."/>
            <person name="Ponting C.P."/>
        </authorList>
    </citation>
    <scope>NUCLEOTIDE SEQUENCE [LARGE SCALE GENOMIC DNA]</scope>
    <source>
        <strain>C57BL/6J</strain>
    </source>
</reference>
<reference key="4">
    <citation type="journal article" date="2004" name="Genome Res.">
        <title>The status, quality, and expansion of the NIH full-length cDNA project: the Mammalian Gene Collection (MGC).</title>
        <authorList>
            <consortium name="The MGC Project Team"/>
        </authorList>
    </citation>
    <scope>NUCLEOTIDE SEQUENCE [LARGE SCALE MRNA] (ISOFORM 1)</scope>
</reference>
<reference key="5">
    <citation type="journal article" date="2002" name="Science">
        <title>Melanopsin-containing retinal ganglion cells: architecture, projections, and intrinsic photosensitivity.</title>
        <authorList>
            <person name="Hattar S."/>
            <person name="Liao H.-W."/>
            <person name="Takao M."/>
            <person name="Berson D.M."/>
            <person name="Yau K.-W."/>
        </authorList>
    </citation>
    <scope>SUBCELLULAR LOCATION</scope>
</reference>
<reference key="6">
    <citation type="journal article" date="2003" name="Nature">
        <title>Melanopsin and rod-cone photoreceptive systems account for all major accessory visual functions in mice.</title>
        <authorList>
            <person name="Hattar S."/>
            <person name="Lucas R.J."/>
            <person name="Mrosovsky N."/>
            <person name="Thompson S."/>
            <person name="Douglas R.H."/>
            <person name="Hankins M.W."/>
            <person name="Lem J."/>
            <person name="Biel M."/>
            <person name="Hofmann F."/>
            <person name="Foster R.G."/>
            <person name="Yau K.-W."/>
        </authorList>
    </citation>
    <scope>FUNCTION</scope>
    <scope>DISRUPTION PHENOTYPE</scope>
</reference>
<reference key="7">
    <citation type="journal article" date="2015" name="Proc. Natl. Acad. Sci. U.S.A.">
        <title>Neuropsin (OPN5)-mediated photoentrainment of local circadian oscillators in mammalian retina and cornea.</title>
        <authorList>
            <person name="Buhr E.D."/>
            <person name="Yue W.W."/>
            <person name="Ren X."/>
            <person name="Jiang Z."/>
            <person name="Liao H.W."/>
            <person name="Mei X."/>
            <person name="Vemaraju S."/>
            <person name="Nguyen M.T."/>
            <person name="Reed R.R."/>
            <person name="Lang R.A."/>
            <person name="Yau K.W."/>
            <person name="Van Gelder R.N."/>
        </authorList>
    </citation>
    <scope>FUNCTION</scope>
    <scope>DISRUPTION PHENOTYPE</scope>
</reference>
<reference key="8">
    <citation type="journal article" date="2018" name="IScience">
        <title>Impaired Circadian Photoentrainment in Opn5-Null Mice.</title>
        <authorList>
            <person name="Ota W."/>
            <person name="Nakane Y."/>
            <person name="Hattar S."/>
            <person name="Yoshimura T."/>
        </authorList>
    </citation>
    <scope>TISSUE SPECIFICITY</scope>
</reference>
<reference key="9">
    <citation type="journal article" date="2019" name="Curr. Biol.">
        <title>Neuropsin (OPN5) Mediates Local Light-Dependent Induction of Circadian Clock Genes and Circadian Photoentrainment in Exposed Murine Skin.</title>
        <authorList>
            <person name="Buhr E.D."/>
            <person name="Vemaraju S."/>
            <person name="Diaz N."/>
            <person name="Lang R.A."/>
            <person name="Van Gelder R.N."/>
        </authorList>
    </citation>
    <scope>TISSUE SPECIFICITY</scope>
</reference>
<reference key="10">
    <citation type="journal article" date="2019" name="Nat. Cell Biol.">
        <title>An opsin 5-dopamine pathway mediates light-dependent vascular development in the eye.</title>
        <authorList>
            <person name="Nguyen M.T."/>
            <person name="Vemaraju S."/>
            <person name="Nayak G."/>
            <person name="Odaka Y."/>
            <person name="Buhr E.D."/>
            <person name="Alonzo N."/>
            <person name="Tran U."/>
            <person name="Batie M."/>
            <person name="Upton B.A."/>
            <person name="Darvas M."/>
            <person name="Kozmik Z."/>
            <person name="Rao S."/>
            <person name="Hegde R.S."/>
            <person name="Iuvone P.M."/>
            <person name="Van Gelder R.N."/>
            <person name="Lang R.A."/>
        </authorList>
    </citation>
    <scope>FUNCTION</scope>
    <scope>DEVELOPMENTAL STAGE</scope>
    <scope>DISRUPTION PHENOTYPE</scope>
</reference>
<accession>Q9QXZ9</accession>
<accession>A4QPG3</accession>
<accession>B2C712</accession>
<protein>
    <recommendedName>
        <fullName>Melanopsin</fullName>
    </recommendedName>
    <alternativeName>
        <fullName>Opsin-4</fullName>
    </alternativeName>
</protein>
<name>OPN4_MOUSE</name>
<comment type="function">
    <text evidence="6 7 8 10">Photoreceptor that binds cis-retinaldehydes (PubMed:19793992). Contributes to pupillar reflex, photoentrainment and other non-image forming responses to light (PubMed:12808468). May be involved in the optokinetic visual tracking response (PubMed:26392540). May be involved in the regulation of retinal hyaloid vessel growth and regression (PubMed:30936473).</text>
</comment>
<comment type="subcellular location">
    <subcellularLocation>
        <location evidence="7">Cell membrane</location>
        <topology evidence="1">Multi-pass membrane protein</topology>
    </subcellularLocation>
    <subcellularLocation>
        <location evidence="5">Cell projection</location>
        <location evidence="5">Axon</location>
    </subcellularLocation>
    <subcellularLocation>
        <location evidence="5">Cell projection</location>
        <location evidence="5">Dendrite</location>
    </subcellularLocation>
    <subcellularLocation>
        <location evidence="5">Perikaryon</location>
    </subcellularLocation>
</comment>
<comment type="alternative products">
    <event type="alternative splicing"/>
    <isoform>
        <id>Q9QXZ9-1</id>
        <name>1</name>
        <name>Opn4L</name>
        <sequence type="displayed"/>
    </isoform>
    <isoform>
        <id>Q9QXZ9-2</id>
        <name>2</name>
        <name>Opn4S</name>
        <sequence type="described" ref="VSP_045928"/>
    </isoform>
</comment>
<comment type="tissue specificity">
    <text evidence="4 9 11">Expressed in the retinal pigment epithelium and ganglion cell layer (at protein level) (PubMed:10632589, PubMed:30240620, PubMed:31607531). Also expressed in amacrine cell layers of the retina (PubMed:10632589). Weakly expressed in vibrissae, and tail (PubMed:31607531).</text>
</comment>
<comment type="tissue specificity">
    <molecule>Isoform 1</molecule>
    <text evidence="7">Observed with processes in the outer strata of inner plexiform layer (IPL) close to the inner nuclear layer (INL) or is found to be bistratified with processes located both in the inner (ON) or outer (OFF) layers of the IPL (at protein level) (PubMed:19793992). A second population of isoform 1 is identified in processes which are confined to the inner layer of the IPL near to the ganglion cell layer (GCL) (at protein level) (PubMed:19793992).</text>
</comment>
<comment type="tissue specificity">
    <molecule>Isoform 2</molecule>
    <text evidence="7">About 40 times more abundant than isoform 1 in the retina (at protein level) (PubMed:19793992). Isoform 2 is involved in processes localized to the outer IPL or is bistratified with processes in both the inner and outer layers of the IPL (at protein level) (PubMed:19793992). Isoform 2 is absent in the processes confined only to the inner layer of the IPL (at protein level) (PubMed:19793992).</text>
</comment>
<comment type="developmental stage">
    <text evidence="10">Expressed in the inner retina at postnatal day 5 (P5), and expressed in retinal ganglion cells at P12.</text>
</comment>
<comment type="disruption phenotype">
    <text evidence="6 8 10">Mice fail to show a pupillar reflex, photoentrainment of the circadian clock and other non-image forming responses to light (PubMed:12808468). Newborn mice show normal hyaloid vessel numbers and normal vessel cellularity, however vessel numbers are increased by P8 (PubMed:30936473). In Opn4 and Pde6b double knockout mice optokinetic visual tracking response is abolished (PubMed:26392540).</text>
</comment>
<comment type="similarity">
    <text evidence="2">Belongs to the G-protein coupled receptor 1 family. Opsin subfamily.</text>
</comment>
<organism>
    <name type="scientific">Mus musculus</name>
    <name type="common">Mouse</name>
    <dbReference type="NCBI Taxonomy" id="10090"/>
    <lineage>
        <taxon>Eukaryota</taxon>
        <taxon>Metazoa</taxon>
        <taxon>Chordata</taxon>
        <taxon>Craniata</taxon>
        <taxon>Vertebrata</taxon>
        <taxon>Euteleostomi</taxon>
        <taxon>Mammalia</taxon>
        <taxon>Eutheria</taxon>
        <taxon>Euarchontoglires</taxon>
        <taxon>Glires</taxon>
        <taxon>Rodentia</taxon>
        <taxon>Myomorpha</taxon>
        <taxon>Muroidea</taxon>
        <taxon>Muridae</taxon>
        <taxon>Murinae</taxon>
        <taxon>Mus</taxon>
        <taxon>Mus</taxon>
    </lineage>
</organism>
<gene>
    <name type="primary">Opn4</name>
    <name type="synonym">Mop</name>
    <name type="synonym">Mopn</name>
</gene>